<accession>Q8AY43</accession>
<comment type="function">
    <text evidence="1">Serine protease inhibitor.</text>
</comment>
<comment type="subcellular location">
    <subcellularLocation>
        <location evidence="1">Secreted</location>
    </subcellularLocation>
</comment>
<comment type="tissue specificity">
    <text>Expressed by the venom gland.</text>
</comment>
<comment type="similarity">
    <text evidence="3">Belongs to the venom Kunitz-type family.</text>
</comment>
<comment type="sequence caution" evidence="3">
    <conflict type="erroneous initiation">
        <sequence resource="EMBL-CDS" id="AAL30068"/>
    </conflict>
</comment>
<proteinExistence type="evidence at transcript level"/>
<evidence type="ECO:0000250" key="1"/>
<evidence type="ECO:0000255" key="2">
    <source>
        <dbReference type="PROSITE-ProRule" id="PRU00031"/>
    </source>
</evidence>
<evidence type="ECO:0000305" key="3"/>
<dbReference type="EMBL" id="AY057886">
    <property type="protein sequence ID" value="AAL30068.1"/>
    <property type="status" value="ALT_INIT"/>
    <property type="molecule type" value="mRNA"/>
</dbReference>
<dbReference type="SMR" id="Q8AY43"/>
<dbReference type="MEROPS" id="I02.031"/>
<dbReference type="GO" id="GO:0005615">
    <property type="term" value="C:extracellular space"/>
    <property type="evidence" value="ECO:0007669"/>
    <property type="project" value="TreeGrafter"/>
</dbReference>
<dbReference type="GO" id="GO:0004867">
    <property type="term" value="F:serine-type endopeptidase inhibitor activity"/>
    <property type="evidence" value="ECO:0007669"/>
    <property type="project" value="UniProtKB-KW"/>
</dbReference>
<dbReference type="CDD" id="cd22594">
    <property type="entry name" value="Kunitz_textilinin-like"/>
    <property type="match status" value="1"/>
</dbReference>
<dbReference type="FunFam" id="4.10.410.10:FF:000020">
    <property type="entry name" value="Collagen, type VI, alpha 3"/>
    <property type="match status" value="1"/>
</dbReference>
<dbReference type="Gene3D" id="4.10.410.10">
    <property type="entry name" value="Pancreatic trypsin inhibitor Kunitz domain"/>
    <property type="match status" value="1"/>
</dbReference>
<dbReference type="InterPro" id="IPR002223">
    <property type="entry name" value="Kunitz_BPTI"/>
</dbReference>
<dbReference type="InterPro" id="IPR036880">
    <property type="entry name" value="Kunitz_BPTI_sf"/>
</dbReference>
<dbReference type="InterPro" id="IPR020901">
    <property type="entry name" value="Prtase_inh_Kunz-CS"/>
</dbReference>
<dbReference type="InterPro" id="IPR050098">
    <property type="entry name" value="TFPI/VKTCI-like"/>
</dbReference>
<dbReference type="PANTHER" id="PTHR10083:SF374">
    <property type="entry name" value="BPTI_KUNITZ INHIBITOR DOMAIN-CONTAINING PROTEIN"/>
    <property type="match status" value="1"/>
</dbReference>
<dbReference type="PANTHER" id="PTHR10083">
    <property type="entry name" value="KUNITZ-TYPE PROTEASE INHIBITOR-RELATED"/>
    <property type="match status" value="1"/>
</dbReference>
<dbReference type="Pfam" id="PF00014">
    <property type="entry name" value="Kunitz_BPTI"/>
    <property type="match status" value="1"/>
</dbReference>
<dbReference type="PRINTS" id="PR00759">
    <property type="entry name" value="BASICPTASE"/>
</dbReference>
<dbReference type="SMART" id="SM00131">
    <property type="entry name" value="KU"/>
    <property type="match status" value="1"/>
</dbReference>
<dbReference type="SUPFAM" id="SSF57362">
    <property type="entry name" value="BPTI-like"/>
    <property type="match status" value="1"/>
</dbReference>
<dbReference type="PROSITE" id="PS00280">
    <property type="entry name" value="BPTI_KUNITZ_1"/>
    <property type="match status" value="1"/>
</dbReference>
<dbReference type="PROSITE" id="PS50279">
    <property type="entry name" value="BPTI_KUNITZ_2"/>
    <property type="match status" value="1"/>
</dbReference>
<reference key="1">
    <citation type="submission" date="2001-10" db="EMBL/GenBank/DDBJ databases">
        <title>Structural and functional genomics of Bungarus candidus.</title>
        <authorList>
            <person name="Tsai I.H."/>
            <person name="Wang Y.M."/>
            <person name="Hsu H.Y."/>
        </authorList>
    </citation>
    <scope>NUCLEOTIDE SEQUENCE [MRNA]</scope>
    <source>
        <tissue>Venom gland</tissue>
    </source>
</reference>
<protein>
    <recommendedName>
        <fullName>Kunitz-type serine protease inhibitor A</fullName>
    </recommendedName>
    <alternativeName>
        <fullName>Kunitz inhibitor A</fullName>
    </alternativeName>
</protein>
<feature type="signal peptide" evidence="1">
    <location>
        <begin position="1"/>
        <end position="24"/>
    </location>
</feature>
<feature type="chain" id="PRO_0000377461" description="Kunitz-type serine protease inhibitor A">
    <location>
        <begin position="25"/>
        <end position="83"/>
    </location>
</feature>
<feature type="domain" description="BPTI/Kunitz inhibitor" evidence="2">
    <location>
        <begin position="31"/>
        <end position="81"/>
    </location>
</feature>
<feature type="site" description="Reactive bond for chymotrypsin" evidence="1">
    <location>
        <begin position="41"/>
        <end position="42"/>
    </location>
</feature>
<feature type="disulfide bond" evidence="2">
    <location>
        <begin position="31"/>
        <end position="81"/>
    </location>
</feature>
<feature type="disulfide bond" evidence="2">
    <location>
        <begin position="40"/>
        <end position="64"/>
    </location>
</feature>
<feature type="disulfide bond" evidence="2">
    <location>
        <begin position="56"/>
        <end position="77"/>
    </location>
</feature>
<keyword id="KW-1015">Disulfide bond</keyword>
<keyword id="KW-0646">Protease inhibitor</keyword>
<keyword id="KW-0964">Secreted</keyword>
<keyword id="KW-0722">Serine protease inhibitor</keyword>
<keyword id="KW-0732">Signal</keyword>
<organism>
    <name type="scientific">Bungarus candidus</name>
    <name type="common">Malayan krait</name>
    <dbReference type="NCBI Taxonomy" id="92438"/>
    <lineage>
        <taxon>Eukaryota</taxon>
        <taxon>Metazoa</taxon>
        <taxon>Chordata</taxon>
        <taxon>Craniata</taxon>
        <taxon>Vertebrata</taxon>
        <taxon>Euteleostomi</taxon>
        <taxon>Lepidosauria</taxon>
        <taxon>Squamata</taxon>
        <taxon>Bifurcata</taxon>
        <taxon>Unidentata</taxon>
        <taxon>Episquamata</taxon>
        <taxon>Toxicofera</taxon>
        <taxon>Serpentes</taxon>
        <taxon>Colubroidea</taxon>
        <taxon>Elapidae</taxon>
        <taxon>Bungarinae</taxon>
        <taxon>Bungarus</taxon>
    </lineage>
</organism>
<sequence>MSSGGLLLLLGLLTLCAELTPVSSKDRPKFCNVPPEPGRCNANVRAFYYNPRLRKCIEFTYGGCGGNANNFKSRGECKRTCAE</sequence>
<name>VKTA_BUNCA</name>